<proteinExistence type="evidence at protein level"/>
<comment type="subcellular location">
    <subcellularLocation>
        <location evidence="4">Cell membrane</location>
        <topology evidence="4">Lipid-anchor</topology>
        <topology evidence="4">GPI-anchor</topology>
    </subcellularLocation>
</comment>
<comment type="induction">
    <text evidence="3">Up-regulated upon milbemycins A3 oxim derivative (A3Ox) treatment.</text>
</comment>
<dbReference type="EMBL" id="CP017630">
    <property type="protein sequence ID" value="AOW31683.1"/>
    <property type="molecule type" value="Genomic_DNA"/>
</dbReference>
<dbReference type="RefSeq" id="XP_719370.1">
    <property type="nucleotide sequence ID" value="XM_714277.1"/>
</dbReference>
<dbReference type="STRING" id="237561.Q5ACN3"/>
<dbReference type="EnsemblFungi" id="CR_10330W_A-T">
    <property type="protein sequence ID" value="CR_10330W_A-T-p1"/>
    <property type="gene ID" value="CR_10330W_A"/>
</dbReference>
<dbReference type="GeneID" id="3638939"/>
<dbReference type="KEGG" id="cal:CAALFM_CR10330WA"/>
<dbReference type="CGD" id="CAL0000189289">
    <property type="gene designation" value="PGA11"/>
</dbReference>
<dbReference type="VEuPathDB" id="FungiDB:CR_10330W_A"/>
<dbReference type="HOGENOM" id="CLU_2145546_0_0_1"/>
<dbReference type="InParanoid" id="Q5ACN3"/>
<dbReference type="OrthoDB" id="4023545at2759"/>
<dbReference type="Proteomes" id="UP000000559">
    <property type="component" value="Chromosome R"/>
</dbReference>
<dbReference type="GO" id="GO:0005886">
    <property type="term" value="C:plasma membrane"/>
    <property type="evidence" value="ECO:0007669"/>
    <property type="project" value="UniProtKB-SubCell"/>
</dbReference>
<dbReference type="GO" id="GO:0098552">
    <property type="term" value="C:side of membrane"/>
    <property type="evidence" value="ECO:0007669"/>
    <property type="project" value="UniProtKB-KW"/>
</dbReference>
<evidence type="ECO:0000255" key="1"/>
<evidence type="ECO:0000256" key="2">
    <source>
        <dbReference type="SAM" id="MobiDB-lite"/>
    </source>
</evidence>
<evidence type="ECO:0000269" key="3">
    <source>
    </source>
</evidence>
<evidence type="ECO:0000305" key="4"/>
<reference key="1">
    <citation type="journal article" date="2004" name="Proc. Natl. Acad. Sci. U.S.A.">
        <title>The diploid genome sequence of Candida albicans.</title>
        <authorList>
            <person name="Jones T."/>
            <person name="Federspiel N.A."/>
            <person name="Chibana H."/>
            <person name="Dungan J."/>
            <person name="Kalman S."/>
            <person name="Magee B.B."/>
            <person name="Newport G."/>
            <person name="Thorstenson Y.R."/>
            <person name="Agabian N."/>
            <person name="Magee P.T."/>
            <person name="Davis R.W."/>
            <person name="Scherer S."/>
        </authorList>
    </citation>
    <scope>NUCLEOTIDE SEQUENCE [LARGE SCALE GENOMIC DNA]</scope>
    <source>
        <strain>SC5314 / ATCC MYA-2876</strain>
    </source>
</reference>
<reference key="2">
    <citation type="journal article" date="2007" name="Genome Biol.">
        <title>Assembly of the Candida albicans genome into sixteen supercontigs aligned on the eight chromosomes.</title>
        <authorList>
            <person name="van het Hoog M."/>
            <person name="Rast T.J."/>
            <person name="Martchenko M."/>
            <person name="Grindle S."/>
            <person name="Dignard D."/>
            <person name="Hogues H."/>
            <person name="Cuomo C."/>
            <person name="Berriman M."/>
            <person name="Scherer S."/>
            <person name="Magee B.B."/>
            <person name="Whiteway M."/>
            <person name="Chibana H."/>
            <person name="Nantel A."/>
            <person name="Magee P.T."/>
        </authorList>
    </citation>
    <scope>GENOME REANNOTATION</scope>
    <source>
        <strain>SC5314 / ATCC MYA-2876</strain>
    </source>
</reference>
<reference key="3">
    <citation type="journal article" date="2013" name="Genome Biol.">
        <title>Assembly of a phased diploid Candida albicans genome facilitates allele-specific measurements and provides a simple model for repeat and indel structure.</title>
        <authorList>
            <person name="Muzzey D."/>
            <person name="Schwartz K."/>
            <person name="Weissman J.S."/>
            <person name="Sherlock G."/>
        </authorList>
    </citation>
    <scope>NUCLEOTIDE SEQUENCE [LARGE SCALE GENOMIC DNA]</scope>
    <scope>GENOME REANNOTATION</scope>
    <source>
        <strain>SC5314 / ATCC MYA-2876</strain>
    </source>
</reference>
<reference key="4">
    <citation type="journal article" date="2003" name="Yeast">
        <title>Genome-wide identification of fungal GPI proteins.</title>
        <authorList>
            <person name="De Groot P.W."/>
            <person name="Hellingwerf K.J."/>
            <person name="Klis F.M."/>
        </authorList>
    </citation>
    <scope>PREDICTION OF GPI-ANCHOR</scope>
</reference>
<reference key="5">
    <citation type="journal article" date="2013" name="Antimicrob. Agents Chemother.">
        <title>Milbemycins: more than efflux inhibitors for fungal pathogens.</title>
        <authorList>
            <person name="Silva L.V."/>
            <person name="Sanguinetti M."/>
            <person name="Vandeputte P."/>
            <person name="Torelli R."/>
            <person name="Rochat B."/>
            <person name="Sanglard D."/>
        </authorList>
    </citation>
    <scope>INDUCTION</scope>
</reference>
<organism>
    <name type="scientific">Candida albicans (strain SC5314 / ATCC MYA-2876)</name>
    <name type="common">Yeast</name>
    <dbReference type="NCBI Taxonomy" id="237561"/>
    <lineage>
        <taxon>Eukaryota</taxon>
        <taxon>Fungi</taxon>
        <taxon>Dikarya</taxon>
        <taxon>Ascomycota</taxon>
        <taxon>Saccharomycotina</taxon>
        <taxon>Pichiomycetes</taxon>
        <taxon>Debaryomycetaceae</taxon>
        <taxon>Candida/Lodderomyces clade</taxon>
        <taxon>Candida</taxon>
    </lineage>
</organism>
<feature type="signal peptide" evidence="1">
    <location>
        <begin position="1"/>
        <end position="18"/>
    </location>
</feature>
<feature type="chain" id="PRO_0000424652" description="Predicted GPI-anchored protein 11">
    <location>
        <begin position="19"/>
        <end position="107"/>
    </location>
</feature>
<feature type="propeptide" id="PRO_0000424653" description="Removed in mature form" evidence="1">
    <location>
        <begin position="108"/>
        <end position="124"/>
    </location>
</feature>
<feature type="region of interest" description="Disordered" evidence="2">
    <location>
        <begin position="38"/>
        <end position="59"/>
    </location>
</feature>
<feature type="lipid moiety-binding region" description="GPI-anchor amidated serine" evidence="1">
    <location>
        <position position="107"/>
    </location>
</feature>
<keyword id="KW-1003">Cell membrane</keyword>
<keyword id="KW-0325">Glycoprotein</keyword>
<keyword id="KW-0336">GPI-anchor</keyword>
<keyword id="KW-0449">Lipoprotein</keyword>
<keyword id="KW-0472">Membrane</keyword>
<keyword id="KW-1185">Reference proteome</keyword>
<keyword id="KW-0732">Signal</keyword>
<gene>
    <name type="primary">PGA11</name>
    <name type="ordered locus">CAALFM_CR10330WA</name>
    <name type="ORF">CaO19.7609</name>
</gene>
<sequence>MKFQFVTALALASTMAVAAPINDQQEVLGAVAATRSKREGGSTGAELQDNNQPTAGLFGDGNSFGNQGLGGFLAATVDSLTKTIASPIKGILAPGGGSGGNGGSGGSGAAGGVGNLFSGILGGL</sequence>
<accession>Q5ACN3</accession>
<accession>A0A1D8PU77</accession>
<protein>
    <recommendedName>
        <fullName>Predicted GPI-anchored protein 11</fullName>
    </recommendedName>
</protein>
<name>PGA11_CANAL</name>